<reference key="1">
    <citation type="journal article" date="2004" name="Nature">
        <title>Genome evolution in yeasts.</title>
        <authorList>
            <person name="Dujon B."/>
            <person name="Sherman D."/>
            <person name="Fischer G."/>
            <person name="Durrens P."/>
            <person name="Casaregola S."/>
            <person name="Lafontaine I."/>
            <person name="de Montigny J."/>
            <person name="Marck C."/>
            <person name="Neuveglise C."/>
            <person name="Talla E."/>
            <person name="Goffard N."/>
            <person name="Frangeul L."/>
            <person name="Aigle M."/>
            <person name="Anthouard V."/>
            <person name="Babour A."/>
            <person name="Barbe V."/>
            <person name="Barnay S."/>
            <person name="Blanchin S."/>
            <person name="Beckerich J.-M."/>
            <person name="Beyne E."/>
            <person name="Bleykasten C."/>
            <person name="Boisrame A."/>
            <person name="Boyer J."/>
            <person name="Cattolico L."/>
            <person name="Confanioleri F."/>
            <person name="de Daruvar A."/>
            <person name="Despons L."/>
            <person name="Fabre E."/>
            <person name="Fairhead C."/>
            <person name="Ferry-Dumazet H."/>
            <person name="Groppi A."/>
            <person name="Hantraye F."/>
            <person name="Hennequin C."/>
            <person name="Jauniaux N."/>
            <person name="Joyet P."/>
            <person name="Kachouri R."/>
            <person name="Kerrest A."/>
            <person name="Koszul R."/>
            <person name="Lemaire M."/>
            <person name="Lesur I."/>
            <person name="Ma L."/>
            <person name="Muller H."/>
            <person name="Nicaud J.-M."/>
            <person name="Nikolski M."/>
            <person name="Oztas S."/>
            <person name="Ozier-Kalogeropoulos O."/>
            <person name="Pellenz S."/>
            <person name="Potier S."/>
            <person name="Richard G.-F."/>
            <person name="Straub M.-L."/>
            <person name="Suleau A."/>
            <person name="Swennen D."/>
            <person name="Tekaia F."/>
            <person name="Wesolowski-Louvel M."/>
            <person name="Westhof E."/>
            <person name="Wirth B."/>
            <person name="Zeniou-Meyer M."/>
            <person name="Zivanovic Y."/>
            <person name="Bolotin-Fukuhara M."/>
            <person name="Thierry A."/>
            <person name="Bouchier C."/>
            <person name="Caudron B."/>
            <person name="Scarpelli C."/>
            <person name="Gaillardin C."/>
            <person name="Weissenbach J."/>
            <person name="Wincker P."/>
            <person name="Souciet J.-L."/>
        </authorList>
    </citation>
    <scope>NUCLEOTIDE SEQUENCE [LARGE SCALE GENOMIC DNA]</scope>
    <source>
        <strain>ATCC 36239 / CBS 767 / BCRC 21394 / JCM 1990 / NBRC 0083 / IGC 2968</strain>
    </source>
</reference>
<sequence length="323" mass="36757">MSVRSLYGISGLRISTRTFSKTAFRLQEQVNQTQESTDTEINGRPLVPANLKNAKGERLMIPSKLQENALRNYELERLRIIPKLNTFYGGNPVHEENLNTLNGLIRKYINLPTRIVDDKEIQNTKFVSFEEYKTRIQSGTRLKPIHHKELTQLLHRLRSIDPELMPREVSDVLAKFANTSSESAKAAQKVKTLDEFGRAISLGKRKRSVAKVYLTKGDGQVMVNGKSLLEYFPKEADRRRIAYPFQVVSQEGQYNVFAEVQSGGSTGQAEAVMYGIAKDLVIFNPLLKSRLHKSGLMTRDARKVERKKPGKVKARKSPTWVKR</sequence>
<gene>
    <name type="primary">MRPS9</name>
    <name type="ordered locus">DEHA2G09878g</name>
</gene>
<comment type="subcellular location">
    <subcellularLocation>
        <location evidence="3">Mitochondrion</location>
    </subcellularLocation>
</comment>
<comment type="similarity">
    <text evidence="3">Belongs to the universal ribosomal protein uS9 family.</text>
</comment>
<protein>
    <recommendedName>
        <fullName evidence="3">Small ribosomal subunit protein uS9m</fullName>
    </recommendedName>
    <alternativeName>
        <fullName>37S ribosomal protein S9, mitochondrial</fullName>
    </alternativeName>
</protein>
<organism>
    <name type="scientific">Debaryomyces hansenii (strain ATCC 36239 / CBS 767 / BCRC 21394 / JCM 1990 / NBRC 0083 / IGC 2968)</name>
    <name type="common">Yeast</name>
    <name type="synonym">Torulaspora hansenii</name>
    <dbReference type="NCBI Taxonomy" id="284592"/>
    <lineage>
        <taxon>Eukaryota</taxon>
        <taxon>Fungi</taxon>
        <taxon>Dikarya</taxon>
        <taxon>Ascomycota</taxon>
        <taxon>Saccharomycotina</taxon>
        <taxon>Pichiomycetes</taxon>
        <taxon>Debaryomycetaceae</taxon>
        <taxon>Debaryomyces</taxon>
    </lineage>
</organism>
<keyword id="KW-0496">Mitochondrion</keyword>
<keyword id="KW-1185">Reference proteome</keyword>
<keyword id="KW-0687">Ribonucleoprotein</keyword>
<keyword id="KW-0689">Ribosomal protein</keyword>
<keyword id="KW-0809">Transit peptide</keyword>
<proteinExistence type="inferred from homology"/>
<dbReference type="EMBL" id="CR382139">
    <property type="protein sequence ID" value="CAG90446.2"/>
    <property type="molecule type" value="Genomic_DNA"/>
</dbReference>
<dbReference type="RefSeq" id="XP_461976.2">
    <property type="nucleotide sequence ID" value="XM_461976.1"/>
</dbReference>
<dbReference type="SMR" id="Q6BIJ5"/>
<dbReference type="FunCoup" id="Q6BIJ5">
    <property type="interactions" value="214"/>
</dbReference>
<dbReference type="STRING" id="284592.Q6BIJ5"/>
<dbReference type="GeneID" id="2904869"/>
<dbReference type="KEGG" id="dha:DEHA2G09878g"/>
<dbReference type="VEuPathDB" id="FungiDB:DEHA2G09878g"/>
<dbReference type="eggNOG" id="KOG1697">
    <property type="taxonomic scope" value="Eukaryota"/>
</dbReference>
<dbReference type="HOGENOM" id="CLU_036531_0_0_1"/>
<dbReference type="InParanoid" id="Q6BIJ5"/>
<dbReference type="OMA" id="RESAMWA"/>
<dbReference type="OrthoDB" id="10254627at2759"/>
<dbReference type="Proteomes" id="UP000000599">
    <property type="component" value="Chromosome G"/>
</dbReference>
<dbReference type="GO" id="GO:0005763">
    <property type="term" value="C:mitochondrial small ribosomal subunit"/>
    <property type="evidence" value="ECO:0007669"/>
    <property type="project" value="EnsemblFungi"/>
</dbReference>
<dbReference type="GO" id="GO:0003723">
    <property type="term" value="F:RNA binding"/>
    <property type="evidence" value="ECO:0007669"/>
    <property type="project" value="TreeGrafter"/>
</dbReference>
<dbReference type="GO" id="GO:0003735">
    <property type="term" value="F:structural constituent of ribosome"/>
    <property type="evidence" value="ECO:0007669"/>
    <property type="project" value="EnsemblFungi"/>
</dbReference>
<dbReference type="GO" id="GO:0006412">
    <property type="term" value="P:translation"/>
    <property type="evidence" value="ECO:0007669"/>
    <property type="project" value="InterPro"/>
</dbReference>
<dbReference type="FunFam" id="3.30.230.10:FF:000001">
    <property type="entry name" value="30S ribosomal protein S9"/>
    <property type="match status" value="1"/>
</dbReference>
<dbReference type="Gene3D" id="3.30.230.10">
    <property type="match status" value="1"/>
</dbReference>
<dbReference type="InterPro" id="IPR020568">
    <property type="entry name" value="Ribosomal_Su5_D2-typ_SF"/>
</dbReference>
<dbReference type="InterPro" id="IPR000754">
    <property type="entry name" value="Ribosomal_uS9"/>
</dbReference>
<dbReference type="InterPro" id="IPR023035">
    <property type="entry name" value="Ribosomal_uS9_bac/plastid"/>
</dbReference>
<dbReference type="InterPro" id="IPR020574">
    <property type="entry name" value="Ribosomal_uS9_CS"/>
</dbReference>
<dbReference type="InterPro" id="IPR014721">
    <property type="entry name" value="Ribsml_uS5_D2-typ_fold_subgr"/>
</dbReference>
<dbReference type="NCBIfam" id="NF001099">
    <property type="entry name" value="PRK00132.1"/>
    <property type="match status" value="1"/>
</dbReference>
<dbReference type="PANTHER" id="PTHR21569">
    <property type="entry name" value="RIBOSOMAL PROTEIN S9"/>
    <property type="match status" value="1"/>
</dbReference>
<dbReference type="PANTHER" id="PTHR21569:SF1">
    <property type="entry name" value="SMALL RIBOSOMAL SUBUNIT PROTEIN US9M"/>
    <property type="match status" value="1"/>
</dbReference>
<dbReference type="Pfam" id="PF00380">
    <property type="entry name" value="Ribosomal_S9"/>
    <property type="match status" value="1"/>
</dbReference>
<dbReference type="SUPFAM" id="SSF54211">
    <property type="entry name" value="Ribosomal protein S5 domain 2-like"/>
    <property type="match status" value="1"/>
</dbReference>
<dbReference type="PROSITE" id="PS00360">
    <property type="entry name" value="RIBOSOMAL_S9"/>
    <property type="match status" value="1"/>
</dbReference>
<name>RT09_DEBHA</name>
<evidence type="ECO:0000255" key="1"/>
<evidence type="ECO:0000256" key="2">
    <source>
        <dbReference type="SAM" id="MobiDB-lite"/>
    </source>
</evidence>
<evidence type="ECO:0000305" key="3"/>
<accession>Q6BIJ5</accession>
<feature type="transit peptide" description="Mitochondrion" evidence="1">
    <location>
        <begin position="1"/>
        <end status="unknown"/>
    </location>
</feature>
<feature type="chain" id="PRO_0000030647" description="Small ribosomal subunit protein uS9m">
    <location>
        <begin status="unknown"/>
        <end position="323"/>
    </location>
</feature>
<feature type="region of interest" description="Disordered" evidence="2">
    <location>
        <begin position="298"/>
        <end position="323"/>
    </location>
</feature>
<feature type="compositionally biased region" description="Basic residues" evidence="2">
    <location>
        <begin position="304"/>
        <end position="323"/>
    </location>
</feature>